<comment type="function">
    <text evidence="1">Involved in the synthesis of autoinducer 2 (AI-2) which is secreted by bacteria and is used to communicate both the cell density and the metabolic potential of the environment. The regulation of gene expression in response to changes in cell density is called quorum sensing. Catalyzes the transformation of S-ribosylhomocysteine (RHC) to homocysteine (HC) and 4,5-dihydroxy-2,3-pentadione (DPD).</text>
</comment>
<comment type="catalytic activity">
    <reaction evidence="1">
        <text>S-(5-deoxy-D-ribos-5-yl)-L-homocysteine = (S)-4,5-dihydroxypentane-2,3-dione + L-homocysteine</text>
        <dbReference type="Rhea" id="RHEA:17753"/>
        <dbReference type="ChEBI" id="CHEBI:29484"/>
        <dbReference type="ChEBI" id="CHEBI:58195"/>
        <dbReference type="ChEBI" id="CHEBI:58199"/>
        <dbReference type="EC" id="4.4.1.21"/>
    </reaction>
</comment>
<comment type="cofactor">
    <cofactor evidence="1">
        <name>Fe cation</name>
        <dbReference type="ChEBI" id="CHEBI:24875"/>
    </cofactor>
    <text evidence="1">Binds 1 Fe cation per subunit.</text>
</comment>
<comment type="subunit">
    <text evidence="1">Homodimer.</text>
</comment>
<comment type="similarity">
    <text evidence="1">Belongs to the LuxS family.</text>
</comment>
<comment type="sequence caution" evidence="2">
    <conflict type="erroneous initiation">
        <sequence resource="EMBL-CDS" id="AAT87530"/>
    </conflict>
</comment>
<keyword id="KW-0071">Autoinducer synthesis</keyword>
<keyword id="KW-0408">Iron</keyword>
<keyword id="KW-0456">Lyase</keyword>
<keyword id="KW-0479">Metal-binding</keyword>
<keyword id="KW-0673">Quorum sensing</keyword>
<reference key="1">
    <citation type="journal article" date="2004" name="J. Infect. Dis.">
        <title>Progress toward characterization of the group A Streptococcus metagenome: complete genome sequence of a macrolide-resistant serotype M6 strain.</title>
        <authorList>
            <person name="Banks D.J."/>
            <person name="Porcella S.F."/>
            <person name="Barbian K.D."/>
            <person name="Beres S.B."/>
            <person name="Philips L.E."/>
            <person name="Voyich J.M."/>
            <person name="DeLeo F.R."/>
            <person name="Martin J.M."/>
            <person name="Somerville G.A."/>
            <person name="Musser J.M."/>
        </authorList>
    </citation>
    <scope>NUCLEOTIDE SEQUENCE [LARGE SCALE GENOMIC DNA]</scope>
    <source>
        <strain>ATCC BAA-946 / MGAS10394</strain>
    </source>
</reference>
<feature type="chain" id="PRO_0000172270" description="S-ribosylhomocysteine lyase">
    <location>
        <begin position="1"/>
        <end position="160"/>
    </location>
</feature>
<feature type="binding site" evidence="1">
    <location>
        <position position="57"/>
    </location>
    <ligand>
        <name>Fe cation</name>
        <dbReference type="ChEBI" id="CHEBI:24875"/>
    </ligand>
</feature>
<feature type="binding site" evidence="1">
    <location>
        <position position="61"/>
    </location>
    <ligand>
        <name>Fe cation</name>
        <dbReference type="ChEBI" id="CHEBI:24875"/>
    </ligand>
</feature>
<feature type="binding site" evidence="1">
    <location>
        <position position="127"/>
    </location>
    <ligand>
        <name>Fe cation</name>
        <dbReference type="ChEBI" id="CHEBI:24875"/>
    </ligand>
</feature>
<proteinExistence type="inferred from homology"/>
<dbReference type="EC" id="4.4.1.21" evidence="1"/>
<dbReference type="EMBL" id="CP000003">
    <property type="protein sequence ID" value="AAT87530.1"/>
    <property type="status" value="ALT_INIT"/>
    <property type="molecule type" value="Genomic_DNA"/>
</dbReference>
<dbReference type="RefSeq" id="WP_002988938.1">
    <property type="nucleotide sequence ID" value="NC_006086.1"/>
</dbReference>
<dbReference type="SMR" id="Q5XAN3"/>
<dbReference type="KEGG" id="spa:M6_Spy1395"/>
<dbReference type="HOGENOM" id="CLU_107531_2_1_9"/>
<dbReference type="Proteomes" id="UP000001167">
    <property type="component" value="Chromosome"/>
</dbReference>
<dbReference type="GO" id="GO:0005506">
    <property type="term" value="F:iron ion binding"/>
    <property type="evidence" value="ECO:0007669"/>
    <property type="project" value="InterPro"/>
</dbReference>
<dbReference type="GO" id="GO:0043768">
    <property type="term" value="F:S-ribosylhomocysteine lyase activity"/>
    <property type="evidence" value="ECO:0007669"/>
    <property type="project" value="UniProtKB-UniRule"/>
</dbReference>
<dbReference type="GO" id="GO:0009372">
    <property type="term" value="P:quorum sensing"/>
    <property type="evidence" value="ECO:0007669"/>
    <property type="project" value="UniProtKB-UniRule"/>
</dbReference>
<dbReference type="Gene3D" id="3.30.1360.80">
    <property type="entry name" value="S-ribosylhomocysteinase (LuxS)"/>
    <property type="match status" value="1"/>
</dbReference>
<dbReference type="HAMAP" id="MF_00091">
    <property type="entry name" value="LuxS"/>
    <property type="match status" value="1"/>
</dbReference>
<dbReference type="InterPro" id="IPR037005">
    <property type="entry name" value="LuxS_sf"/>
</dbReference>
<dbReference type="InterPro" id="IPR011249">
    <property type="entry name" value="Metalloenz_LuxS/M16"/>
</dbReference>
<dbReference type="InterPro" id="IPR003815">
    <property type="entry name" value="S-ribosylhomocysteinase"/>
</dbReference>
<dbReference type="NCBIfam" id="NF002607">
    <property type="entry name" value="PRK02260.2-5"/>
    <property type="match status" value="1"/>
</dbReference>
<dbReference type="NCBIfam" id="NF002608">
    <property type="entry name" value="PRK02260.3-1"/>
    <property type="match status" value="1"/>
</dbReference>
<dbReference type="PANTHER" id="PTHR35799">
    <property type="entry name" value="S-RIBOSYLHOMOCYSTEINE LYASE"/>
    <property type="match status" value="1"/>
</dbReference>
<dbReference type="PANTHER" id="PTHR35799:SF1">
    <property type="entry name" value="S-RIBOSYLHOMOCYSTEINE LYASE"/>
    <property type="match status" value="1"/>
</dbReference>
<dbReference type="Pfam" id="PF02664">
    <property type="entry name" value="LuxS"/>
    <property type="match status" value="1"/>
</dbReference>
<dbReference type="PIRSF" id="PIRSF006160">
    <property type="entry name" value="AI2"/>
    <property type="match status" value="1"/>
</dbReference>
<dbReference type="PRINTS" id="PR01487">
    <property type="entry name" value="LUXSPROTEIN"/>
</dbReference>
<dbReference type="SUPFAM" id="SSF63411">
    <property type="entry name" value="LuxS/MPP-like metallohydrolase"/>
    <property type="match status" value="1"/>
</dbReference>
<gene>
    <name evidence="1" type="primary">luxS</name>
    <name type="ordered locus">M6_Spy1395</name>
</gene>
<accession>Q5XAN3</accession>
<evidence type="ECO:0000255" key="1">
    <source>
        <dbReference type="HAMAP-Rule" id="MF_00091"/>
    </source>
</evidence>
<evidence type="ECO:0000305" key="2"/>
<name>LUXS_STRP6</name>
<organism>
    <name type="scientific">Streptococcus pyogenes serotype M6 (strain ATCC BAA-946 / MGAS10394)</name>
    <dbReference type="NCBI Taxonomy" id="286636"/>
    <lineage>
        <taxon>Bacteria</taxon>
        <taxon>Bacillati</taxon>
        <taxon>Bacillota</taxon>
        <taxon>Bacilli</taxon>
        <taxon>Lactobacillales</taxon>
        <taxon>Streptococcaceae</taxon>
        <taxon>Streptococcus</taxon>
    </lineage>
</organism>
<protein>
    <recommendedName>
        <fullName evidence="1">S-ribosylhomocysteine lyase</fullName>
        <ecNumber evidence="1">4.4.1.21</ecNumber>
    </recommendedName>
    <alternativeName>
        <fullName evidence="1">AI-2 synthesis protein</fullName>
    </alternativeName>
    <alternativeName>
        <fullName evidence="1">Autoinducer-2 production protein LuxS</fullName>
    </alternativeName>
</protein>
<sequence length="160" mass="17979">MTKEVIVESFELDHTIVKAPYVRLISEEFGPKGDRITNFDVRLVQPNQNSIETAGLHTIEHLLAKLIRQRIDGMIDCSPFGCRTGFHLIMWGKHSSTDIAKVIKSSLEEIATGITWEDVPGTTLESCGNYKDHSLFAAKEWAQLIIDQGISDDPFSRHVI</sequence>